<feature type="chain" id="PRO_1000116471" description="UDP-N-acetylglucosamine--N-acetylmuramyl-(pentapeptide) pyrophosphoryl-undecaprenol N-acetylglucosamine transferase">
    <location>
        <begin position="1"/>
        <end position="360"/>
    </location>
</feature>
<feature type="binding site" evidence="1">
    <location>
        <begin position="15"/>
        <end position="17"/>
    </location>
    <ligand>
        <name>UDP-N-acetyl-alpha-D-glucosamine</name>
        <dbReference type="ChEBI" id="CHEBI:57705"/>
    </ligand>
</feature>
<feature type="binding site" evidence="1">
    <location>
        <position position="124"/>
    </location>
    <ligand>
        <name>UDP-N-acetyl-alpha-D-glucosamine</name>
        <dbReference type="ChEBI" id="CHEBI:57705"/>
    </ligand>
</feature>
<feature type="binding site" evidence="1">
    <location>
        <position position="165"/>
    </location>
    <ligand>
        <name>UDP-N-acetyl-alpha-D-glucosamine</name>
        <dbReference type="ChEBI" id="CHEBI:57705"/>
    </ligand>
</feature>
<feature type="binding site" evidence="1">
    <location>
        <position position="191"/>
    </location>
    <ligand>
        <name>UDP-N-acetyl-alpha-D-glucosamine</name>
        <dbReference type="ChEBI" id="CHEBI:57705"/>
    </ligand>
</feature>
<feature type="binding site" evidence="1">
    <location>
        <position position="285"/>
    </location>
    <ligand>
        <name>UDP-N-acetyl-alpha-D-glucosamine</name>
        <dbReference type="ChEBI" id="CHEBI:57705"/>
    </ligand>
</feature>
<organism>
    <name type="scientific">Gloeothece citriformis (strain PCC 7424)</name>
    <name type="common">Cyanothece sp. (strain PCC 7424)</name>
    <dbReference type="NCBI Taxonomy" id="65393"/>
    <lineage>
        <taxon>Bacteria</taxon>
        <taxon>Bacillati</taxon>
        <taxon>Cyanobacteriota</taxon>
        <taxon>Cyanophyceae</taxon>
        <taxon>Oscillatoriophycideae</taxon>
        <taxon>Chroococcales</taxon>
        <taxon>Aphanothecaceae</taxon>
        <taxon>Gloeothece</taxon>
        <taxon>Gloeothece citriformis</taxon>
    </lineage>
</organism>
<protein>
    <recommendedName>
        <fullName evidence="1">UDP-N-acetylglucosamine--N-acetylmuramyl-(pentapeptide) pyrophosphoryl-undecaprenol N-acetylglucosamine transferase</fullName>
        <ecNumber evidence="1">2.4.1.227</ecNumber>
    </recommendedName>
    <alternativeName>
        <fullName evidence="1">Undecaprenyl-PP-MurNAc-pentapeptide-UDPGlcNAc GlcNAc transferase</fullName>
    </alternativeName>
</protein>
<comment type="function">
    <text evidence="1">Cell wall formation. Catalyzes the transfer of a GlcNAc subunit on undecaprenyl-pyrophosphoryl-MurNAc-pentapeptide (lipid intermediate I) to form undecaprenyl-pyrophosphoryl-MurNAc-(pentapeptide)GlcNAc (lipid intermediate II).</text>
</comment>
<comment type="catalytic activity">
    <reaction evidence="1">
        <text>di-trans,octa-cis-undecaprenyl diphospho-N-acetyl-alpha-D-muramoyl-L-alanyl-D-glutamyl-meso-2,6-diaminopimeloyl-D-alanyl-D-alanine + UDP-N-acetyl-alpha-D-glucosamine = di-trans,octa-cis-undecaprenyl diphospho-[N-acetyl-alpha-D-glucosaminyl-(1-&gt;4)]-N-acetyl-alpha-D-muramoyl-L-alanyl-D-glutamyl-meso-2,6-diaminopimeloyl-D-alanyl-D-alanine + UDP + H(+)</text>
        <dbReference type="Rhea" id="RHEA:31227"/>
        <dbReference type="ChEBI" id="CHEBI:15378"/>
        <dbReference type="ChEBI" id="CHEBI:57705"/>
        <dbReference type="ChEBI" id="CHEBI:58223"/>
        <dbReference type="ChEBI" id="CHEBI:61387"/>
        <dbReference type="ChEBI" id="CHEBI:61388"/>
        <dbReference type="EC" id="2.4.1.227"/>
    </reaction>
</comment>
<comment type="pathway">
    <text evidence="1">Cell wall biogenesis; peptidoglycan biosynthesis.</text>
</comment>
<comment type="subcellular location">
    <subcellularLocation>
        <location evidence="1">Cell inner membrane</location>
        <topology evidence="1">Peripheral membrane protein</topology>
        <orientation evidence="1">Cytoplasmic side</orientation>
    </subcellularLocation>
</comment>
<comment type="similarity">
    <text evidence="1">Belongs to the glycosyltransferase 28 family. MurG subfamily.</text>
</comment>
<name>MURG_GLOC7</name>
<dbReference type="EC" id="2.4.1.227" evidence="1"/>
<dbReference type="EMBL" id="CP001291">
    <property type="protein sequence ID" value="ACK71898.1"/>
    <property type="molecule type" value="Genomic_DNA"/>
</dbReference>
<dbReference type="RefSeq" id="WP_015955491.1">
    <property type="nucleotide sequence ID" value="NC_011729.1"/>
</dbReference>
<dbReference type="SMR" id="B7KGH1"/>
<dbReference type="STRING" id="65393.PCC7424_3506"/>
<dbReference type="CAZy" id="GT28">
    <property type="family name" value="Glycosyltransferase Family 28"/>
</dbReference>
<dbReference type="KEGG" id="cyc:PCC7424_3506"/>
<dbReference type="eggNOG" id="COG0707">
    <property type="taxonomic scope" value="Bacteria"/>
</dbReference>
<dbReference type="HOGENOM" id="CLU_037404_0_1_3"/>
<dbReference type="OrthoDB" id="9808936at2"/>
<dbReference type="UniPathway" id="UPA00219"/>
<dbReference type="Proteomes" id="UP000002384">
    <property type="component" value="Chromosome"/>
</dbReference>
<dbReference type="GO" id="GO:0005886">
    <property type="term" value="C:plasma membrane"/>
    <property type="evidence" value="ECO:0007669"/>
    <property type="project" value="UniProtKB-SubCell"/>
</dbReference>
<dbReference type="GO" id="GO:0051991">
    <property type="term" value="F:UDP-N-acetyl-D-glucosamine:N-acetylmuramoyl-L-alanyl-D-glutamyl-meso-2,6-diaminopimelyl-D-alanyl-D-alanine-diphosphoundecaprenol 4-beta-N-acetylglucosaminlytransferase activity"/>
    <property type="evidence" value="ECO:0007669"/>
    <property type="project" value="RHEA"/>
</dbReference>
<dbReference type="GO" id="GO:0050511">
    <property type="term" value="F:undecaprenyldiphospho-muramoylpentapeptide beta-N-acetylglucosaminyltransferase activity"/>
    <property type="evidence" value="ECO:0007669"/>
    <property type="project" value="UniProtKB-UniRule"/>
</dbReference>
<dbReference type="GO" id="GO:0005975">
    <property type="term" value="P:carbohydrate metabolic process"/>
    <property type="evidence" value="ECO:0007669"/>
    <property type="project" value="InterPro"/>
</dbReference>
<dbReference type="GO" id="GO:0051301">
    <property type="term" value="P:cell division"/>
    <property type="evidence" value="ECO:0007669"/>
    <property type="project" value="UniProtKB-KW"/>
</dbReference>
<dbReference type="GO" id="GO:0071555">
    <property type="term" value="P:cell wall organization"/>
    <property type="evidence" value="ECO:0007669"/>
    <property type="project" value="UniProtKB-KW"/>
</dbReference>
<dbReference type="GO" id="GO:0030259">
    <property type="term" value="P:lipid glycosylation"/>
    <property type="evidence" value="ECO:0007669"/>
    <property type="project" value="UniProtKB-UniRule"/>
</dbReference>
<dbReference type="GO" id="GO:0009252">
    <property type="term" value="P:peptidoglycan biosynthetic process"/>
    <property type="evidence" value="ECO:0007669"/>
    <property type="project" value="UniProtKB-UniRule"/>
</dbReference>
<dbReference type="GO" id="GO:0008360">
    <property type="term" value="P:regulation of cell shape"/>
    <property type="evidence" value="ECO:0007669"/>
    <property type="project" value="UniProtKB-KW"/>
</dbReference>
<dbReference type="CDD" id="cd03785">
    <property type="entry name" value="GT28_MurG"/>
    <property type="match status" value="1"/>
</dbReference>
<dbReference type="Gene3D" id="3.40.50.2000">
    <property type="entry name" value="Glycogen Phosphorylase B"/>
    <property type="match status" value="2"/>
</dbReference>
<dbReference type="HAMAP" id="MF_00033">
    <property type="entry name" value="MurG"/>
    <property type="match status" value="1"/>
</dbReference>
<dbReference type="InterPro" id="IPR006009">
    <property type="entry name" value="GlcNAc_MurG"/>
</dbReference>
<dbReference type="InterPro" id="IPR007235">
    <property type="entry name" value="Glyco_trans_28_C"/>
</dbReference>
<dbReference type="InterPro" id="IPR004276">
    <property type="entry name" value="GlycoTrans_28_N"/>
</dbReference>
<dbReference type="NCBIfam" id="TIGR01133">
    <property type="entry name" value="murG"/>
    <property type="match status" value="1"/>
</dbReference>
<dbReference type="PANTHER" id="PTHR21015:SF22">
    <property type="entry name" value="GLYCOSYLTRANSFERASE"/>
    <property type="match status" value="1"/>
</dbReference>
<dbReference type="PANTHER" id="PTHR21015">
    <property type="entry name" value="UDP-N-ACETYLGLUCOSAMINE--N-ACETYLMURAMYL-(PENTAPEPTIDE) PYROPHOSPHORYL-UNDECAPRENOL N-ACETYLGLUCOSAMINE TRANSFERASE 1"/>
    <property type="match status" value="1"/>
</dbReference>
<dbReference type="Pfam" id="PF04101">
    <property type="entry name" value="Glyco_tran_28_C"/>
    <property type="match status" value="1"/>
</dbReference>
<dbReference type="Pfam" id="PF03033">
    <property type="entry name" value="Glyco_transf_28"/>
    <property type="match status" value="1"/>
</dbReference>
<dbReference type="SUPFAM" id="SSF53756">
    <property type="entry name" value="UDP-Glycosyltransferase/glycogen phosphorylase"/>
    <property type="match status" value="1"/>
</dbReference>
<evidence type="ECO:0000255" key="1">
    <source>
        <dbReference type="HAMAP-Rule" id="MF_00033"/>
    </source>
</evidence>
<gene>
    <name evidence="1" type="primary">murG</name>
    <name type="ordered locus">PCC7424_3506</name>
</gene>
<sequence>MTQTPIRLLIAASGTGGHLFPALAVAEQLLDYKIEWLGVPNRLEQTLVPQDYPLHTIAVEGFQTGFSLKSVKILLGLFSSVFQVRKLLRERKIDIVFTTGGYIASPAILAARLEGIPVILHESNYLPGKVTRFFSRWCQTVALGFEGSSQYFPNVETVWVSTPVRAQFLTPQPLDLPLEEDAFLIVVVGGSQGAVAVNQLVRQCALKWLEKGAYIVHLTGDRDPEADSFKHPHYFSLPFYENMAGLLQRANLAISRAGAGTLTELAITQTPAILIPYPYAAEDHQTYNGKVFADAGAAYLYSQKDLTPQLLEKVVLDLLNSPAKLQEMAEKTGKLAVADSAKRLADLVRNHTLLAEVSQK</sequence>
<accession>B7KGH1</accession>
<keyword id="KW-0131">Cell cycle</keyword>
<keyword id="KW-0132">Cell division</keyword>
<keyword id="KW-0997">Cell inner membrane</keyword>
<keyword id="KW-1003">Cell membrane</keyword>
<keyword id="KW-0133">Cell shape</keyword>
<keyword id="KW-0961">Cell wall biogenesis/degradation</keyword>
<keyword id="KW-0328">Glycosyltransferase</keyword>
<keyword id="KW-0472">Membrane</keyword>
<keyword id="KW-0573">Peptidoglycan synthesis</keyword>
<keyword id="KW-1185">Reference proteome</keyword>
<keyword id="KW-0808">Transferase</keyword>
<proteinExistence type="inferred from homology"/>
<reference key="1">
    <citation type="journal article" date="2011" name="MBio">
        <title>Novel metabolic attributes of the genus Cyanothece, comprising a group of unicellular nitrogen-fixing Cyanobacteria.</title>
        <authorList>
            <person name="Bandyopadhyay A."/>
            <person name="Elvitigala T."/>
            <person name="Welsh E."/>
            <person name="Stockel J."/>
            <person name="Liberton M."/>
            <person name="Min H."/>
            <person name="Sherman L.A."/>
            <person name="Pakrasi H.B."/>
        </authorList>
    </citation>
    <scope>NUCLEOTIDE SEQUENCE [LARGE SCALE GENOMIC DNA]</scope>
    <source>
        <strain>PCC 7424</strain>
    </source>
</reference>